<sequence>MANYFNTLNLRQQLAQLGKCRFMGRDEFADGASYLQGKKVVIVGCGAQGLNQGLNMRDSGLDISYALRKEAIAEKRASWRKATENGFKVGTYEELIPQADLVVNLTPDKQHSDVVRSVQPLMKDGAALGYSHGFNIVEVGEQIRKDITVVMVAPKCPGTEVREEYKRGFGVPTLIAVHPENDPQGEGMAIAKAWAAATGGHRAGVLESSFVAEVKSDLMGEQTILCGMLQAGSLLCFDKLVAEGTDPAYAEKLIQFGWETITEALKQGGITLMMDRLSNPAKLRAYALSEQLKEIMAPLFQKHMDDIISGEFSSGMMADWANDDKKLLTWREETGKTAFETAPQYEGKIGEQEYFDKGVLMIAMVKAGVELAFETMVDSGIIEESAYYESLHELPLIANTIARKRLYEMNVVISDTAEYGNYLFSYACVPLLKPFMAELQPGDLGSAIPEGAVDNAQLRDVNDAIRSHAIEQVGKKLRGYMTDMKRIAVAG</sequence>
<gene>
    <name evidence="2" type="primary">ilvC</name>
    <name type="ordered locus">STM3909</name>
    <name type="ORF">STMD1.81</name>
</gene>
<accession>P05989</accession>
<accession>Q9L6S4</accession>
<dbReference type="EC" id="1.1.1.86" evidence="2 6"/>
<dbReference type="EMBL" id="AF233324">
    <property type="protein sequence ID" value="AAF33476.1"/>
    <property type="molecule type" value="Genomic_DNA"/>
</dbReference>
<dbReference type="EMBL" id="AE006468">
    <property type="protein sequence ID" value="AAL22759.1"/>
    <property type="molecule type" value="Genomic_DNA"/>
</dbReference>
<dbReference type="EMBL" id="K03522">
    <property type="protein sequence ID" value="AAA27154.1"/>
    <property type="molecule type" value="Genomic_DNA"/>
</dbReference>
<dbReference type="RefSeq" id="NP_462800.1">
    <property type="nucleotide sequence ID" value="NC_003197.2"/>
</dbReference>
<dbReference type="RefSeq" id="WP_000024948.1">
    <property type="nucleotide sequence ID" value="NC_003197.2"/>
</dbReference>
<dbReference type="SMR" id="P05989"/>
<dbReference type="STRING" id="99287.STM3909"/>
<dbReference type="PaxDb" id="99287-STM3909"/>
<dbReference type="GeneID" id="1255435"/>
<dbReference type="KEGG" id="stm:STM3909"/>
<dbReference type="PATRIC" id="fig|99287.12.peg.4131"/>
<dbReference type="HOGENOM" id="CLU_551905_0_0_6"/>
<dbReference type="OMA" id="ILCFDKM"/>
<dbReference type="PhylomeDB" id="P05989"/>
<dbReference type="BioCyc" id="SENT99287:STM3909-MONOMER"/>
<dbReference type="UniPathway" id="UPA00047">
    <property type="reaction ID" value="UER00056"/>
</dbReference>
<dbReference type="UniPathway" id="UPA00049">
    <property type="reaction ID" value="UER00060"/>
</dbReference>
<dbReference type="Proteomes" id="UP000001014">
    <property type="component" value="Chromosome"/>
</dbReference>
<dbReference type="GO" id="GO:0005829">
    <property type="term" value="C:cytosol"/>
    <property type="evidence" value="ECO:0000318"/>
    <property type="project" value="GO_Central"/>
</dbReference>
<dbReference type="GO" id="GO:0004455">
    <property type="term" value="F:ketol-acid reductoisomerase activity"/>
    <property type="evidence" value="ECO:0000314"/>
    <property type="project" value="UniProtKB"/>
</dbReference>
<dbReference type="GO" id="GO:0000287">
    <property type="term" value="F:magnesium ion binding"/>
    <property type="evidence" value="ECO:0000314"/>
    <property type="project" value="UniProtKB"/>
</dbReference>
<dbReference type="GO" id="GO:0009097">
    <property type="term" value="P:isoleucine biosynthetic process"/>
    <property type="evidence" value="ECO:0000318"/>
    <property type="project" value="GO_Central"/>
</dbReference>
<dbReference type="GO" id="GO:0009099">
    <property type="term" value="P:L-valine biosynthetic process"/>
    <property type="evidence" value="ECO:0000318"/>
    <property type="project" value="GO_Central"/>
</dbReference>
<dbReference type="FunFam" id="1.10.1040.10:FF:000007">
    <property type="entry name" value="Ketol-acid reductoisomerase (NADP(+))"/>
    <property type="match status" value="1"/>
</dbReference>
<dbReference type="FunFam" id="3.40.50.720:FF:000043">
    <property type="entry name" value="Ketol-acid reductoisomerase (NADP(+))"/>
    <property type="match status" value="1"/>
</dbReference>
<dbReference type="Gene3D" id="1.10.1040.10">
    <property type="entry name" value="N-(1-d-carboxylethyl)-l-norvaline Dehydrogenase, domain 2"/>
    <property type="match status" value="1"/>
</dbReference>
<dbReference type="Gene3D" id="3.40.50.720">
    <property type="entry name" value="NAD(P)-binding Rossmann-like Domain"/>
    <property type="match status" value="1"/>
</dbReference>
<dbReference type="HAMAP" id="MF_00435">
    <property type="entry name" value="IlvC"/>
    <property type="match status" value="1"/>
</dbReference>
<dbReference type="InterPro" id="IPR008927">
    <property type="entry name" value="6-PGluconate_DH-like_C_sf"/>
</dbReference>
<dbReference type="InterPro" id="IPR013328">
    <property type="entry name" value="6PGD_dom2"/>
</dbReference>
<dbReference type="InterPro" id="IPR013023">
    <property type="entry name" value="KARI"/>
</dbReference>
<dbReference type="InterPro" id="IPR000506">
    <property type="entry name" value="KARI_C"/>
</dbReference>
<dbReference type="InterPro" id="IPR013116">
    <property type="entry name" value="KARI_N"/>
</dbReference>
<dbReference type="InterPro" id="IPR036291">
    <property type="entry name" value="NAD(P)-bd_dom_sf"/>
</dbReference>
<dbReference type="NCBIfam" id="TIGR00465">
    <property type="entry name" value="ilvC"/>
    <property type="match status" value="1"/>
</dbReference>
<dbReference type="NCBIfam" id="NF003557">
    <property type="entry name" value="PRK05225.1"/>
    <property type="match status" value="1"/>
</dbReference>
<dbReference type="PANTHER" id="PTHR21371">
    <property type="entry name" value="KETOL-ACID REDUCTOISOMERASE, MITOCHONDRIAL"/>
    <property type="match status" value="1"/>
</dbReference>
<dbReference type="PANTHER" id="PTHR21371:SF1">
    <property type="entry name" value="KETOL-ACID REDUCTOISOMERASE, MITOCHONDRIAL"/>
    <property type="match status" value="1"/>
</dbReference>
<dbReference type="Pfam" id="PF01450">
    <property type="entry name" value="KARI_C"/>
    <property type="match status" value="2"/>
</dbReference>
<dbReference type="Pfam" id="PF07991">
    <property type="entry name" value="KARI_N"/>
    <property type="match status" value="1"/>
</dbReference>
<dbReference type="SUPFAM" id="SSF48179">
    <property type="entry name" value="6-phosphogluconate dehydrogenase C-terminal domain-like"/>
    <property type="match status" value="2"/>
</dbReference>
<dbReference type="SUPFAM" id="SSF51735">
    <property type="entry name" value="NAD(P)-binding Rossmann-fold domains"/>
    <property type="match status" value="1"/>
</dbReference>
<dbReference type="PROSITE" id="PS51851">
    <property type="entry name" value="KARI_C"/>
    <property type="match status" value="2"/>
</dbReference>
<dbReference type="PROSITE" id="PS51850">
    <property type="entry name" value="KARI_N"/>
    <property type="match status" value="1"/>
</dbReference>
<evidence type="ECO:0000250" key="1">
    <source>
        <dbReference type="UniProtKB" id="P05793"/>
    </source>
</evidence>
<evidence type="ECO:0000255" key="2">
    <source>
        <dbReference type="HAMAP-Rule" id="MF_00435"/>
    </source>
</evidence>
<evidence type="ECO:0000255" key="3">
    <source>
        <dbReference type="PROSITE-ProRule" id="PRU01197"/>
    </source>
</evidence>
<evidence type="ECO:0000255" key="4">
    <source>
        <dbReference type="PROSITE-ProRule" id="PRU01198"/>
    </source>
</evidence>
<evidence type="ECO:0000269" key="5">
    <source>
    </source>
</evidence>
<evidence type="ECO:0000269" key="6">
    <source>
    </source>
</evidence>
<evidence type="ECO:0000303" key="7">
    <source>
    </source>
</evidence>
<keyword id="KW-0028">Amino-acid biosynthesis</keyword>
<keyword id="KW-0100">Branched-chain amino acid biosynthesis</keyword>
<keyword id="KW-0460">Magnesium</keyword>
<keyword id="KW-0479">Metal-binding</keyword>
<keyword id="KW-0521">NADP</keyword>
<keyword id="KW-0560">Oxidoreductase</keyword>
<keyword id="KW-1185">Reference proteome</keyword>
<keyword id="KW-0677">Repeat</keyword>
<reference key="1">
    <citation type="journal article" date="2001" name="Nature">
        <title>Complete genome sequence of Salmonella enterica serovar Typhimurium LT2.</title>
        <authorList>
            <person name="McClelland M."/>
            <person name="Sanderson K.E."/>
            <person name="Spieth J."/>
            <person name="Clifton S.W."/>
            <person name="Latreille P."/>
            <person name="Courtney L."/>
            <person name="Porwollik S."/>
            <person name="Ali J."/>
            <person name="Dante M."/>
            <person name="Du F."/>
            <person name="Hou S."/>
            <person name="Layman D."/>
            <person name="Leonard S."/>
            <person name="Nguyen C."/>
            <person name="Scott K."/>
            <person name="Holmes A."/>
            <person name="Grewal N."/>
            <person name="Mulvaney E."/>
            <person name="Ryan E."/>
            <person name="Sun H."/>
            <person name="Florea L."/>
            <person name="Miller W."/>
            <person name="Stoneking T."/>
            <person name="Nhan M."/>
            <person name="Waterston R."/>
            <person name="Wilson R.K."/>
        </authorList>
    </citation>
    <scope>NUCLEOTIDE SEQUENCE [LARGE SCALE GENOMIC DNA]</scope>
    <source>
        <strain>LT2 / SGSC1412 / ATCC 700720</strain>
    </source>
</reference>
<reference key="2">
    <citation type="journal article" date="1986" name="J. Biol. Chem.">
        <title>Nucleotide sequence and in vivo expression of the ilvY and ilvC genes in Escherichia coli K12. Transcription from divergent overlapping promoters.</title>
        <authorList>
            <person name="Wek R.C."/>
            <person name="Hatfield G.W."/>
        </authorList>
    </citation>
    <scope>NUCLEOTIDE SEQUENCE [GENOMIC DNA] OF 1-28</scope>
    <scope>INDUCTION</scope>
    <source>
        <strain>LT2 / SGSC1412 / ATCC 700720</strain>
    </source>
</reference>
<reference key="3">
    <citation type="journal article" date="1969" name="J. Biol. Chem.">
        <title>Purification and properties of the acetohydroxy acid isomeroreductase of Salmonella typhimurium.</title>
        <authorList>
            <person name="Arfin S.M."/>
            <person name="Umbarger H.E."/>
        </authorList>
    </citation>
    <scope>FUNCTION</scope>
    <scope>CATALYTIC ACTIVITY</scope>
    <scope>BIOPHYSICOCHEMICAL PROPERTIES</scope>
    <scope>COFACTOR</scope>
</reference>
<protein>
    <recommendedName>
        <fullName evidence="2 7">Ketol-acid reductoisomerase (NADP(+))</fullName>
        <shortName evidence="2 7">KARI</shortName>
        <ecNumber evidence="2 6">1.1.1.86</ecNumber>
    </recommendedName>
    <alternativeName>
        <fullName evidence="2">Acetohydroxy-acid isomeroreductase</fullName>
        <shortName evidence="2">AHIR</shortName>
    </alternativeName>
    <alternativeName>
        <fullName evidence="2">Alpha-keto-beta-hydroxylacyl reductoisomerase</fullName>
    </alternativeName>
    <alternativeName>
        <fullName evidence="2">Ketol-acid reductoisomerase type 2</fullName>
    </alternativeName>
    <alternativeName>
        <fullName evidence="2">Ketol-acid reductoisomerase type II</fullName>
    </alternativeName>
</protein>
<feature type="initiator methionine" description="Removed" evidence="1">
    <location>
        <position position="1"/>
    </location>
</feature>
<feature type="chain" id="PRO_0000151352" description="Ketol-acid reductoisomerase (NADP(+))">
    <location>
        <begin position="2"/>
        <end position="491"/>
    </location>
</feature>
<feature type="domain" description="KARI N-terminal Rossmann" evidence="3">
    <location>
        <begin position="15"/>
        <end position="208"/>
    </location>
</feature>
<feature type="domain" description="KARI C-terminal knotted 1" evidence="4">
    <location>
        <begin position="209"/>
        <end position="344"/>
    </location>
</feature>
<feature type="domain" description="KARI C-terminal knotted 2" evidence="4">
    <location>
        <begin position="345"/>
        <end position="484"/>
    </location>
</feature>
<feature type="active site" evidence="2">
    <location>
        <position position="132"/>
    </location>
</feature>
<feature type="binding site" evidence="2">
    <location>
        <begin position="45"/>
        <end position="48"/>
    </location>
    <ligand>
        <name>NADP(+)</name>
        <dbReference type="ChEBI" id="CHEBI:58349"/>
    </ligand>
</feature>
<feature type="binding site" evidence="2">
    <location>
        <position position="68"/>
    </location>
    <ligand>
        <name>NADP(+)</name>
        <dbReference type="ChEBI" id="CHEBI:58349"/>
    </ligand>
</feature>
<feature type="binding site" evidence="2">
    <location>
        <position position="76"/>
    </location>
    <ligand>
        <name>NADP(+)</name>
        <dbReference type="ChEBI" id="CHEBI:58349"/>
    </ligand>
</feature>
<feature type="binding site" evidence="2">
    <location>
        <position position="78"/>
    </location>
    <ligand>
        <name>NADP(+)</name>
        <dbReference type="ChEBI" id="CHEBI:58349"/>
    </ligand>
</feature>
<feature type="binding site" evidence="2">
    <location>
        <begin position="108"/>
        <end position="110"/>
    </location>
    <ligand>
        <name>NADP(+)</name>
        <dbReference type="ChEBI" id="CHEBI:58349"/>
    </ligand>
</feature>
<feature type="binding site" evidence="2">
    <location>
        <position position="158"/>
    </location>
    <ligand>
        <name>NADP(+)</name>
        <dbReference type="ChEBI" id="CHEBI:58349"/>
    </ligand>
</feature>
<feature type="binding site" evidence="2">
    <location>
        <position position="217"/>
    </location>
    <ligand>
        <name>Mg(2+)</name>
        <dbReference type="ChEBI" id="CHEBI:18420"/>
        <label>1</label>
    </ligand>
</feature>
<feature type="binding site" evidence="2">
    <location>
        <position position="217"/>
    </location>
    <ligand>
        <name>Mg(2+)</name>
        <dbReference type="ChEBI" id="CHEBI:18420"/>
        <label>2</label>
    </ligand>
</feature>
<feature type="binding site" evidence="2">
    <location>
        <position position="221"/>
    </location>
    <ligand>
        <name>Mg(2+)</name>
        <dbReference type="ChEBI" id="CHEBI:18420"/>
        <label>1</label>
    </ligand>
</feature>
<feature type="binding site" evidence="2">
    <location>
        <position position="389"/>
    </location>
    <ligand>
        <name>Mg(2+)</name>
        <dbReference type="ChEBI" id="CHEBI:18420"/>
        <label>2</label>
    </ligand>
</feature>
<feature type="binding site" evidence="2">
    <location>
        <position position="393"/>
    </location>
    <ligand>
        <name>Mg(2+)</name>
        <dbReference type="ChEBI" id="CHEBI:18420"/>
        <label>2</label>
    </ligand>
</feature>
<feature type="binding site" evidence="2">
    <location>
        <position position="414"/>
    </location>
    <ligand>
        <name>substrate</name>
    </ligand>
</feature>
<proteinExistence type="evidence at protein level"/>
<name>ILVC_SALTY</name>
<organism>
    <name type="scientific">Salmonella typhimurium (strain LT2 / SGSC1412 / ATCC 700720)</name>
    <dbReference type="NCBI Taxonomy" id="99287"/>
    <lineage>
        <taxon>Bacteria</taxon>
        <taxon>Pseudomonadati</taxon>
        <taxon>Pseudomonadota</taxon>
        <taxon>Gammaproteobacteria</taxon>
        <taxon>Enterobacterales</taxon>
        <taxon>Enterobacteriaceae</taxon>
        <taxon>Salmonella</taxon>
    </lineage>
</organism>
<comment type="function">
    <text evidence="2 6">Involved in the biosynthesis of branched-chain amino acids (BCAA). Catalyzes an alkyl-migration followed by a ketol-acid reduction of (S)-2-acetolactate (S2AL) to yield (R)-2,3-dihydroxy-isovalerate. In the isomerase reaction, S2AL is rearranged via a Mg-dependent methyl migration to produce 3-hydroxy-3-methyl-2-ketobutyrate (HMKB). In the reductase reaction, this 2-ketoacid undergoes a metal-dependent reduction by NADPH to yield (R)-2,3-dihydroxy-isovalerate.</text>
</comment>
<comment type="catalytic activity">
    <reaction evidence="2 6">
        <text>(2R)-2,3-dihydroxy-3-methylbutanoate + NADP(+) = (2S)-2-acetolactate + NADPH + H(+)</text>
        <dbReference type="Rhea" id="RHEA:22068"/>
        <dbReference type="ChEBI" id="CHEBI:15378"/>
        <dbReference type="ChEBI" id="CHEBI:49072"/>
        <dbReference type="ChEBI" id="CHEBI:57783"/>
        <dbReference type="ChEBI" id="CHEBI:58349"/>
        <dbReference type="ChEBI" id="CHEBI:58476"/>
        <dbReference type="EC" id="1.1.1.86"/>
    </reaction>
</comment>
<comment type="catalytic activity">
    <reaction evidence="2">
        <text>(2R,3R)-2,3-dihydroxy-3-methylpentanoate + NADP(+) = (S)-2-ethyl-2-hydroxy-3-oxobutanoate + NADPH + H(+)</text>
        <dbReference type="Rhea" id="RHEA:13493"/>
        <dbReference type="ChEBI" id="CHEBI:15378"/>
        <dbReference type="ChEBI" id="CHEBI:49256"/>
        <dbReference type="ChEBI" id="CHEBI:49258"/>
        <dbReference type="ChEBI" id="CHEBI:57783"/>
        <dbReference type="ChEBI" id="CHEBI:58349"/>
        <dbReference type="EC" id="1.1.1.86"/>
    </reaction>
</comment>
<comment type="cofactor">
    <cofactor evidence="2 6">
        <name>Mg(2+)</name>
        <dbReference type="ChEBI" id="CHEBI:18420"/>
    </cofactor>
    <text evidence="2">Binds 2 magnesium ions per subunit.</text>
</comment>
<comment type="biophysicochemical properties">
    <phDependence>
        <text evidence="6">Optimum pH is 7.5.</text>
    </phDependence>
</comment>
<comment type="pathway">
    <text evidence="2">Amino-acid biosynthesis; L-isoleucine biosynthesis; L-isoleucine from 2-oxobutanoate: step 2/4.</text>
</comment>
<comment type="pathway">
    <text evidence="2">Amino-acid biosynthesis; L-valine biosynthesis; L-valine from pyruvate: step 2/4.</text>
</comment>
<comment type="induction">
    <text evidence="5">In the presence of acetohydroxybutyrate and acetolactate.</text>
</comment>
<comment type="similarity">
    <text evidence="2">Belongs to the ketol-acid reductoisomerase family.</text>
</comment>